<dbReference type="EC" id="7.1.2.2" evidence="1"/>
<dbReference type="EMBL" id="CP000284">
    <property type="protein sequence ID" value="ABE51007.1"/>
    <property type="molecule type" value="Genomic_DNA"/>
</dbReference>
<dbReference type="RefSeq" id="WP_011480960.1">
    <property type="nucleotide sequence ID" value="NC_007947.1"/>
</dbReference>
<dbReference type="SMR" id="Q1GXN0"/>
<dbReference type="STRING" id="265072.Mfla_2744"/>
<dbReference type="KEGG" id="mfa:Mfla_2744"/>
<dbReference type="eggNOG" id="COG0055">
    <property type="taxonomic scope" value="Bacteria"/>
</dbReference>
<dbReference type="HOGENOM" id="CLU_022398_0_2_4"/>
<dbReference type="OrthoDB" id="9801639at2"/>
<dbReference type="Proteomes" id="UP000002440">
    <property type="component" value="Chromosome"/>
</dbReference>
<dbReference type="GO" id="GO:0005886">
    <property type="term" value="C:plasma membrane"/>
    <property type="evidence" value="ECO:0007669"/>
    <property type="project" value="UniProtKB-SubCell"/>
</dbReference>
<dbReference type="GO" id="GO:0045259">
    <property type="term" value="C:proton-transporting ATP synthase complex"/>
    <property type="evidence" value="ECO:0007669"/>
    <property type="project" value="UniProtKB-KW"/>
</dbReference>
<dbReference type="GO" id="GO:0005524">
    <property type="term" value="F:ATP binding"/>
    <property type="evidence" value="ECO:0007669"/>
    <property type="project" value="UniProtKB-UniRule"/>
</dbReference>
<dbReference type="GO" id="GO:0016887">
    <property type="term" value="F:ATP hydrolysis activity"/>
    <property type="evidence" value="ECO:0007669"/>
    <property type="project" value="InterPro"/>
</dbReference>
<dbReference type="GO" id="GO:0046933">
    <property type="term" value="F:proton-transporting ATP synthase activity, rotational mechanism"/>
    <property type="evidence" value="ECO:0007669"/>
    <property type="project" value="UniProtKB-UniRule"/>
</dbReference>
<dbReference type="CDD" id="cd18110">
    <property type="entry name" value="ATP-synt_F1_beta_C"/>
    <property type="match status" value="1"/>
</dbReference>
<dbReference type="CDD" id="cd18115">
    <property type="entry name" value="ATP-synt_F1_beta_N"/>
    <property type="match status" value="1"/>
</dbReference>
<dbReference type="CDD" id="cd01133">
    <property type="entry name" value="F1-ATPase_beta_CD"/>
    <property type="match status" value="1"/>
</dbReference>
<dbReference type="FunFam" id="1.10.1140.10:FF:000001">
    <property type="entry name" value="ATP synthase subunit beta"/>
    <property type="match status" value="1"/>
</dbReference>
<dbReference type="FunFam" id="3.40.50.300:FF:000004">
    <property type="entry name" value="ATP synthase subunit beta"/>
    <property type="match status" value="1"/>
</dbReference>
<dbReference type="Gene3D" id="2.40.10.170">
    <property type="match status" value="1"/>
</dbReference>
<dbReference type="Gene3D" id="1.10.1140.10">
    <property type="entry name" value="Bovine Mitochondrial F1-atpase, Atp Synthase Beta Chain, Chain D, domain 3"/>
    <property type="match status" value="1"/>
</dbReference>
<dbReference type="Gene3D" id="3.40.50.300">
    <property type="entry name" value="P-loop containing nucleotide triphosphate hydrolases"/>
    <property type="match status" value="1"/>
</dbReference>
<dbReference type="HAMAP" id="MF_01347">
    <property type="entry name" value="ATP_synth_beta_bact"/>
    <property type="match status" value="1"/>
</dbReference>
<dbReference type="InterPro" id="IPR003593">
    <property type="entry name" value="AAA+_ATPase"/>
</dbReference>
<dbReference type="InterPro" id="IPR055190">
    <property type="entry name" value="ATP-synt_VA_C"/>
</dbReference>
<dbReference type="InterPro" id="IPR005722">
    <property type="entry name" value="ATP_synth_F1_bsu"/>
</dbReference>
<dbReference type="InterPro" id="IPR020003">
    <property type="entry name" value="ATPase_a/bsu_AS"/>
</dbReference>
<dbReference type="InterPro" id="IPR050053">
    <property type="entry name" value="ATPase_alpha/beta_chains"/>
</dbReference>
<dbReference type="InterPro" id="IPR004100">
    <property type="entry name" value="ATPase_F1/V1/A1_a/bsu_N"/>
</dbReference>
<dbReference type="InterPro" id="IPR036121">
    <property type="entry name" value="ATPase_F1/V1/A1_a/bsu_N_sf"/>
</dbReference>
<dbReference type="InterPro" id="IPR000194">
    <property type="entry name" value="ATPase_F1/V1/A1_a/bsu_nucl-bd"/>
</dbReference>
<dbReference type="InterPro" id="IPR024034">
    <property type="entry name" value="ATPase_F1/V1_b/a_C"/>
</dbReference>
<dbReference type="InterPro" id="IPR027417">
    <property type="entry name" value="P-loop_NTPase"/>
</dbReference>
<dbReference type="NCBIfam" id="TIGR01039">
    <property type="entry name" value="atpD"/>
    <property type="match status" value="1"/>
</dbReference>
<dbReference type="PANTHER" id="PTHR15184">
    <property type="entry name" value="ATP SYNTHASE"/>
    <property type="match status" value="1"/>
</dbReference>
<dbReference type="PANTHER" id="PTHR15184:SF71">
    <property type="entry name" value="ATP SYNTHASE SUBUNIT BETA, MITOCHONDRIAL"/>
    <property type="match status" value="1"/>
</dbReference>
<dbReference type="Pfam" id="PF00006">
    <property type="entry name" value="ATP-synt_ab"/>
    <property type="match status" value="1"/>
</dbReference>
<dbReference type="Pfam" id="PF02874">
    <property type="entry name" value="ATP-synt_ab_N"/>
    <property type="match status" value="1"/>
</dbReference>
<dbReference type="Pfam" id="PF22919">
    <property type="entry name" value="ATP-synt_VA_C"/>
    <property type="match status" value="1"/>
</dbReference>
<dbReference type="SMART" id="SM00382">
    <property type="entry name" value="AAA"/>
    <property type="match status" value="1"/>
</dbReference>
<dbReference type="SUPFAM" id="SSF47917">
    <property type="entry name" value="C-terminal domain of alpha and beta subunits of F1 ATP synthase"/>
    <property type="match status" value="1"/>
</dbReference>
<dbReference type="SUPFAM" id="SSF50615">
    <property type="entry name" value="N-terminal domain of alpha and beta subunits of F1 ATP synthase"/>
    <property type="match status" value="1"/>
</dbReference>
<dbReference type="SUPFAM" id="SSF52540">
    <property type="entry name" value="P-loop containing nucleoside triphosphate hydrolases"/>
    <property type="match status" value="1"/>
</dbReference>
<dbReference type="PROSITE" id="PS00152">
    <property type="entry name" value="ATPASE_ALPHA_BETA"/>
    <property type="match status" value="1"/>
</dbReference>
<feature type="chain" id="PRO_0000254298" description="ATP synthase subunit beta">
    <location>
        <begin position="1"/>
        <end position="465"/>
    </location>
</feature>
<feature type="binding site" evidence="1">
    <location>
        <begin position="154"/>
        <end position="161"/>
    </location>
    <ligand>
        <name>ATP</name>
        <dbReference type="ChEBI" id="CHEBI:30616"/>
    </ligand>
</feature>
<accession>Q1GXN0</accession>
<name>ATPB_METFK</name>
<comment type="function">
    <text evidence="1">Produces ATP from ADP in the presence of a proton gradient across the membrane. The catalytic sites are hosted primarily by the beta subunits.</text>
</comment>
<comment type="catalytic activity">
    <reaction evidence="1">
        <text>ATP + H2O + 4 H(+)(in) = ADP + phosphate + 5 H(+)(out)</text>
        <dbReference type="Rhea" id="RHEA:57720"/>
        <dbReference type="ChEBI" id="CHEBI:15377"/>
        <dbReference type="ChEBI" id="CHEBI:15378"/>
        <dbReference type="ChEBI" id="CHEBI:30616"/>
        <dbReference type="ChEBI" id="CHEBI:43474"/>
        <dbReference type="ChEBI" id="CHEBI:456216"/>
        <dbReference type="EC" id="7.1.2.2"/>
    </reaction>
</comment>
<comment type="subunit">
    <text evidence="1">F-type ATPases have 2 components, CF(1) - the catalytic core - and CF(0) - the membrane proton channel. CF(1) has five subunits: alpha(3), beta(3), gamma(1), delta(1), epsilon(1). CF(0) has three main subunits: a(1), b(2) and c(9-12). The alpha and beta chains form an alternating ring which encloses part of the gamma chain. CF(1) is attached to CF(0) by a central stalk formed by the gamma and epsilon chains, while a peripheral stalk is formed by the delta and b chains.</text>
</comment>
<comment type="subcellular location">
    <subcellularLocation>
        <location evidence="1">Cell inner membrane</location>
        <topology evidence="1">Peripheral membrane protein</topology>
    </subcellularLocation>
</comment>
<comment type="similarity">
    <text evidence="1">Belongs to the ATPase alpha/beta chains family.</text>
</comment>
<gene>
    <name evidence="1" type="primary">atpD</name>
    <name type="ordered locus">Mfla_2744</name>
</gene>
<sequence>MSQGKVVQCIGAVVDVEFPRDQMPKVYDALILDEDSPTVEAGLTLEVQQQLGDGVVRTIAMGSSDGLSRGMKVKNTGSQIQVPVGHGTLGRIMDVLGRPIDEAGPIEADEKRSIHQKAPTFEELSPSVDLLETGIKVIDLVCPFAKGGKVGLFGGAGVGKTVNMMELINNIAKQHSGLSVFAGVGERTREGNDFYHEMKDSNVLDKVGMVFGQMNEPPGNRLRVALTGLTMAERFRDEGRDILFFVDNIYRYTLAGTEVSALLGRMPSAVGYQPTLAEEMGRLQERITSTKVGSITSIQAVYVPADDLTDPSPATTFLHLDSTVVLSRDIAALGIYPAVDPLDSTSRQLDPQIVGEEHYSVARAVQSTLQRYKELRDIIAILGMDELSPEDKLAVARARKIQRFLSQPFHVAEVFTGAPGKYVPLKDTIKGFKAIVNGEYDHLPEQAFYMVGSIEEAVEKAKTLN</sequence>
<organism>
    <name type="scientific">Methylobacillus flagellatus (strain ATCC 51484 / DSM 6875 / VKM B-1610 / KT)</name>
    <dbReference type="NCBI Taxonomy" id="265072"/>
    <lineage>
        <taxon>Bacteria</taxon>
        <taxon>Pseudomonadati</taxon>
        <taxon>Pseudomonadota</taxon>
        <taxon>Betaproteobacteria</taxon>
        <taxon>Nitrosomonadales</taxon>
        <taxon>Methylophilaceae</taxon>
        <taxon>Methylobacillus</taxon>
    </lineage>
</organism>
<keyword id="KW-0066">ATP synthesis</keyword>
<keyword id="KW-0067">ATP-binding</keyword>
<keyword id="KW-0997">Cell inner membrane</keyword>
<keyword id="KW-1003">Cell membrane</keyword>
<keyword id="KW-0139">CF(1)</keyword>
<keyword id="KW-0375">Hydrogen ion transport</keyword>
<keyword id="KW-0406">Ion transport</keyword>
<keyword id="KW-0472">Membrane</keyword>
<keyword id="KW-0547">Nucleotide-binding</keyword>
<keyword id="KW-1185">Reference proteome</keyword>
<keyword id="KW-1278">Translocase</keyword>
<keyword id="KW-0813">Transport</keyword>
<protein>
    <recommendedName>
        <fullName evidence="1">ATP synthase subunit beta</fullName>
        <ecNumber evidence="1">7.1.2.2</ecNumber>
    </recommendedName>
    <alternativeName>
        <fullName evidence="1">ATP synthase F1 sector subunit beta</fullName>
    </alternativeName>
    <alternativeName>
        <fullName evidence="1">F-ATPase subunit beta</fullName>
    </alternativeName>
</protein>
<reference key="1">
    <citation type="submission" date="2006-03" db="EMBL/GenBank/DDBJ databases">
        <title>Complete sequence of Methylobacillus flagellatus KT.</title>
        <authorList>
            <consortium name="US DOE Joint Genome Institute"/>
            <person name="Copeland A."/>
            <person name="Lucas S."/>
            <person name="Lapidus A."/>
            <person name="Barry K."/>
            <person name="Detter J.C."/>
            <person name="Glavina del Rio T."/>
            <person name="Hammon N."/>
            <person name="Israni S."/>
            <person name="Dalin E."/>
            <person name="Tice H."/>
            <person name="Pitluck S."/>
            <person name="Brettin T."/>
            <person name="Bruce D."/>
            <person name="Han C."/>
            <person name="Tapia R."/>
            <person name="Saunders E."/>
            <person name="Gilna P."/>
            <person name="Schmutz J."/>
            <person name="Larimer F."/>
            <person name="Land M."/>
            <person name="Kyrpides N."/>
            <person name="Anderson I."/>
            <person name="Richardson P."/>
        </authorList>
    </citation>
    <scope>NUCLEOTIDE SEQUENCE [LARGE SCALE GENOMIC DNA]</scope>
    <source>
        <strain>ATCC 51484 / DSM 6875 / VKM B-1610 / KT</strain>
    </source>
</reference>
<evidence type="ECO:0000255" key="1">
    <source>
        <dbReference type="HAMAP-Rule" id="MF_01347"/>
    </source>
</evidence>
<proteinExistence type="inferred from homology"/>